<sequence>MILKSFLLGNLVSLCMKIINSVVVVGLYYGFLTTFSIGPSYLFLLRAQVMEEGEEGTEKKVSATTGFITGQLMMFISIYYAPLHLALGRPHTITVLALPYLLFHFFWKNHKNFFDYGSTTRNSMRNLSIQCVFLNNLIFQLFNHFILPSSMLARLVNIYMFRCNNKMLFVTSSFVGWLIGHILFMKWVGLVLVWIRQNNSIRSNKYIRSNKSELINYMARIFSILLFITCVYYLGRIPSPIFTKKLNPQTEEGWESEEETDVEIETASETKGTKQEQEGSTEEDPSPSLFSEEKEDPDKIDETEEIRVNGKEKTKDEFHFTEIRYNNSPVYKGLFWFEKPLLTFLFDYKRWNRPLRYIKNNRFERTTRKEMSQYFFYTCRSDGKERISFTYPPSLSTFGEMIQRRMSLPTLEKLSSAELYNHWVYTNQHKNNNLNNEFLNRIEALDTGFFSLDILEKSTRLCNDKTRKYYLPKMYDPILNGLYRGTIQKKISPSIINKISLENFIETLEINKIHSLLLPDTDYQEFEQKIDQFDKKTFSTENRHLFTLISKLDRESGSRKGLSLFSEKEQGGVGSKKRDKFYKFLLNTILTSPNDQKTKQKFVIKEISKKVPRWSYKLITELEFLSGTAHEGLPLDYQIRSRKRDGIIIYRPTKRSRNASIKNWMSFRDYSEESDFRREFIKGSMRVQRRKTVIWKLFQANAHSPLFLDRIKKYPLFSFNIPERMKSFFRNCMGKGSGLKDYTEEQEDKIKEKASIKIAEAWDFIPYPQATRSLILIIQSIFRKYILLPSLIIVKNIGRILLSQPPEWTEDFDEWNREKHIICTYNGVQVSEFELPKNWFKDGIQIKIVFPFYLKPWHRSKLRTSFSSYKDLKKEEQPKFYFLTAWGAQTTLNFGSIPPKPSFFKPILKELKKKMQKTKNNNLKVLRVLKERTKDFLQDSKEPKEVIIKNVLFLFIKRIKKELFKIHPTRLFILKKVYESGETNKKKDYIIRNQQIHDSFIKIKSTDNKNDSLRDKKIKNLTDRTSTIRTKTKGLMKEKNSNAKKRGSPNKTSFNRKKKSPNILLKILKIKRRSTRLIYKFYLFITIFIKRIYIDIFVCIIHIARISTQLLLESINFCFDKYIYIYNNKTNKTNYNNKTNQEIKKKKEINFISTIKSALYNIQNSKRNSRLFFDLSSLSQAYVFYKLSQTPIIHFYKLRDIFEYNGTPFFLKTAMKNYFLTQGIFHSELRHTKLSSYETNQWKSWLRGHYQYNLSQIRWSGLIPKKWRTTINEGGMTPNKDLTKCNSYEKDRLLYHKKQKDFKVYPLPNQKDNFLKYYIYDLFSYKSINSEIKKSSYIFFGSPSELKNNQKIAFNYNKKKQNLSENLEEIPINHYLETGDIMYMKKNPDRKYFDWTILNFFIRQKIDIEAWTKMDYNSNINTKLGNTNYHKIYKMDKNAILSLTIHQDLERNPINDKKIFFDWMEMNEEILNPISTNLKLTFFPEFVPLYNVYKTKPWIIPSKLLLLNLNKKKNINENKKFHFFRPSNEKIYYELMNRNQEEKKTAGRRGLRSYAQNQDKMKKKYKIRNKMRREIIFLRKHYLLFQWIIDDGLIPKLTERMINNIKIYCYLLGLRNPRDTTISSIQRKELNLDIMVIRQKLTPIELNKKGIFFLDPTRLSVKNDGYFIIYQTVGISLVHKSKYQTPQRYREQRYINKKKLDESIPRYQIILRKRDKKHYDFVVPENILSSRRRRELRILLSFNSKNLNSVDKNPVFCNKKNIKRRNPFLDQKKHLDRDKNELIKLKLFLWPNYRLEDLACMNRYWFNTNNGSRFSILRIYPQFKIG</sequence>
<evidence type="ECO:0000250" key="1">
    <source>
        <dbReference type="UniProtKB" id="P56785"/>
    </source>
</evidence>
<evidence type="ECO:0000255" key="2"/>
<evidence type="ECO:0000256" key="3">
    <source>
        <dbReference type="SAM" id="MobiDB-lite"/>
    </source>
</evidence>
<evidence type="ECO:0000305" key="4"/>
<name>TI214_DAUCA</name>
<keyword id="KW-0150">Chloroplast</keyword>
<keyword id="KW-0472">Membrane</keyword>
<keyword id="KW-0934">Plastid</keyword>
<keyword id="KW-1001">Plastid inner membrane</keyword>
<keyword id="KW-0653">Protein transport</keyword>
<keyword id="KW-0812">Transmembrane</keyword>
<keyword id="KW-1133">Transmembrane helix</keyword>
<keyword id="KW-0813">Transport</keyword>
<protein>
    <recommendedName>
        <fullName evidence="1">Protein TIC 214</fullName>
    </recommendedName>
    <alternativeName>
        <fullName evidence="1">Translocon at the inner envelope membrane of chloroplasts 214</fullName>
        <shortName evidence="1">AtTIC214</shortName>
    </alternativeName>
</protein>
<accession>Q0G9Q4</accession>
<geneLocation type="chloroplast"/>
<feature type="chain" id="PRO_0000262606" description="Protein TIC 214">
    <location>
        <begin position="1"/>
        <end position="1826"/>
    </location>
</feature>
<feature type="transmembrane region" description="Helical" evidence="2">
    <location>
        <begin position="18"/>
        <end position="38"/>
    </location>
</feature>
<feature type="transmembrane region" description="Helical" evidence="2">
    <location>
        <begin position="67"/>
        <end position="87"/>
    </location>
</feature>
<feature type="transmembrane region" description="Helical" evidence="2">
    <location>
        <begin position="127"/>
        <end position="147"/>
    </location>
</feature>
<feature type="transmembrane region" description="Helical" evidence="2">
    <location>
        <begin position="175"/>
        <end position="195"/>
    </location>
</feature>
<feature type="transmembrane region" description="Helical" evidence="2">
    <location>
        <begin position="221"/>
        <end position="241"/>
    </location>
</feature>
<feature type="transmembrane region" description="Helical" evidence="2">
    <location>
        <begin position="774"/>
        <end position="794"/>
    </location>
</feature>
<feature type="transmembrane region" description="Helical" evidence="2">
    <location>
        <begin position="1081"/>
        <end position="1101"/>
    </location>
</feature>
<feature type="region of interest" description="Disordered" evidence="3">
    <location>
        <begin position="250"/>
        <end position="308"/>
    </location>
</feature>
<feature type="region of interest" description="Disordered" evidence="3">
    <location>
        <begin position="1032"/>
        <end position="1057"/>
    </location>
</feature>
<feature type="compositionally biased region" description="Acidic residues" evidence="3">
    <location>
        <begin position="252"/>
        <end position="266"/>
    </location>
</feature>
<feature type="compositionally biased region" description="Acidic residues" evidence="3">
    <location>
        <begin position="293"/>
        <end position="304"/>
    </location>
</feature>
<feature type="compositionally biased region" description="Basic residues" evidence="3">
    <location>
        <begin position="1042"/>
        <end position="1057"/>
    </location>
</feature>
<proteinExistence type="inferred from homology"/>
<reference key="1">
    <citation type="journal article" date="2006" name="BMC Genomics">
        <title>Complete plastid genome sequence of Daucus carota: implications for biotechnology and phylogeny of angiosperms.</title>
        <authorList>
            <person name="Ruhlman T."/>
            <person name="Lee S.-B."/>
            <person name="Jansen R.K."/>
            <person name="Hostetler J.B."/>
            <person name="Tallon L.J."/>
            <person name="Town C.D."/>
            <person name="Daniell H."/>
        </authorList>
    </citation>
    <scope>NUCLEOTIDE SEQUENCE [LARGE SCALE GENOMIC DNA]</scope>
    <source>
        <strain>cv. Danvers Half-long</strain>
    </source>
</reference>
<organism>
    <name type="scientific">Daucus carota</name>
    <name type="common">Wild carrot</name>
    <dbReference type="NCBI Taxonomy" id="4039"/>
    <lineage>
        <taxon>Eukaryota</taxon>
        <taxon>Viridiplantae</taxon>
        <taxon>Streptophyta</taxon>
        <taxon>Embryophyta</taxon>
        <taxon>Tracheophyta</taxon>
        <taxon>Spermatophyta</taxon>
        <taxon>Magnoliopsida</taxon>
        <taxon>eudicotyledons</taxon>
        <taxon>Gunneridae</taxon>
        <taxon>Pentapetalae</taxon>
        <taxon>asterids</taxon>
        <taxon>campanulids</taxon>
        <taxon>Apiales</taxon>
        <taxon>Apiaceae</taxon>
        <taxon>Apioideae</taxon>
        <taxon>Scandiceae</taxon>
        <taxon>Daucinae</taxon>
        <taxon>Daucus</taxon>
        <taxon>Daucus sect. Daucus</taxon>
    </lineage>
</organism>
<comment type="function">
    <text evidence="1">Involved in protein precursor import into chloroplasts. May be part of an intermediate translocation complex acting as a protein-conducting channel at the inner envelope.</text>
</comment>
<comment type="subunit">
    <text evidence="1">Part of the Tic complex.</text>
</comment>
<comment type="subcellular location">
    <subcellularLocation>
        <location evidence="1">Plastid</location>
        <location evidence="1">Chloroplast inner membrane</location>
        <topology evidence="2">Multi-pass membrane protein</topology>
    </subcellularLocation>
</comment>
<comment type="similarity">
    <text evidence="4">Belongs to the TIC214 family.</text>
</comment>
<dbReference type="EMBL" id="DQ898156">
    <property type="protein sequence ID" value="ABI32482.1"/>
    <property type="molecule type" value="Genomic_DNA"/>
</dbReference>
<dbReference type="RefSeq" id="YP_740175.1">
    <property type="nucleotide sequence ID" value="NC_008325.1"/>
</dbReference>
<dbReference type="GeneID" id="4266818"/>
<dbReference type="GO" id="GO:0009706">
    <property type="term" value="C:chloroplast inner membrane"/>
    <property type="evidence" value="ECO:0007669"/>
    <property type="project" value="UniProtKB-SubCell"/>
</dbReference>
<dbReference type="GO" id="GO:0015031">
    <property type="term" value="P:protein transport"/>
    <property type="evidence" value="ECO:0007669"/>
    <property type="project" value="UniProtKB-KW"/>
</dbReference>
<dbReference type="InterPro" id="IPR008896">
    <property type="entry name" value="TIC214"/>
</dbReference>
<dbReference type="PANTHER" id="PTHR33163:SF40">
    <property type="entry name" value="PROTEIN TIC 214"/>
    <property type="match status" value="1"/>
</dbReference>
<dbReference type="PANTHER" id="PTHR33163">
    <property type="entry name" value="PROTEIN TIC 214-RELATED"/>
    <property type="match status" value="1"/>
</dbReference>
<dbReference type="Pfam" id="PF05758">
    <property type="entry name" value="Ycf1"/>
    <property type="match status" value="1"/>
</dbReference>
<gene>
    <name evidence="1" type="primary">TIC214</name>
    <name type="synonym">ycf1</name>
</gene>